<proteinExistence type="evidence at protein level"/>
<comment type="function">
    <text evidence="1 2 9">Component of the chromosomal passenger complex (CPC), a complex that acts as a key regulator of mitosis. The CPC complex has essential functions at the centromere in ensuring correct chromosome alignment and segregation and is required for chromatin-induced microtubule stabilization and spindle assembly. Acts as a scaffold regulating CPC localization and activity. The C-terminus associates with AURKB, the N-terminus associated with BIRC5/survivin and CDCA8/borealin tethers the CPC to the inner centromere, and the microtubule binding activity within the central SAH domain directs AURKB toward substrates near microtubules. The flexibility of the SAH domain is proposed to allow AURKB to follow substrates on dynamic microtubules while ensuring CPC docking to static chromatin. Activates AURKB.</text>
</comment>
<comment type="subunit">
    <text evidence="1 2 4 6 9">Component of the chromosomal passenger complex (CPC) composed of at least BIRC5/survivin, CDCA8/borealin, INCENP and AURKB; in the complex binds directly to AURKB via the IN box, and forms a triple-helix bundle-based subcomplex with BIRC5 and CDCA8 via its N-terminus. The initially reported homodimerization is questioned as the SAH domain is shown to be monomeric. Interacts with CBX5.</text>
</comment>
<comment type="subcellular location">
    <subcellularLocation>
        <location evidence="5">Nucleus</location>
    </subcellularLocation>
    <subcellularLocation>
        <location evidence="5">Chromosome</location>
        <location evidence="5">Centromere</location>
    </subcellularLocation>
    <subcellularLocation>
        <location evidence="5">Chromosome</location>
    </subcellularLocation>
    <subcellularLocation>
        <location evidence="5">Cytoplasm</location>
        <location evidence="5">Cytoskeleton</location>
        <location evidence="5">Spindle</location>
    </subcellularLocation>
    <subcellularLocation>
        <location evidence="2">Midbody</location>
    </subcellularLocation>
    <subcellularLocation>
        <location evidence="2">Chromosome</location>
        <location evidence="2">Centromere</location>
        <location evidence="2">Kinetochore</location>
    </subcellularLocation>
    <text evidence="5">Is restricted to the nucleus in interphase, remains tightly bound to the chromosomes until early metaphase, and during late metaphase gets concentrated in linear arrays that transect the metaphase plate between the chromosomes (PubMed:8408220). As anaphase begins to move to the spindle midzone where it is intimately associated with the bundled microtubules (PubMed:8408220). Later in anaphase gets closely associated with the cell cortex, and by telophase is concentrated at each side of the midbody in the intercellular bridge, with which it is discarded after (PubMed:8408220).</text>
</comment>
<comment type="alternative products">
    <event type="alternative splicing"/>
    <isoform>
        <id>P53352-1</id>
        <name>INCENP II</name>
        <sequence type="displayed"/>
    </isoform>
    <isoform>
        <id>P53352-2</id>
        <name>INCENP I</name>
        <sequence type="described" ref="VSP_004292"/>
    </isoform>
</comment>
<comment type="domain">
    <text evidence="1">The IN box mediates interaction with AURKB and AURKC.</text>
</comment>
<comment type="domain">
    <text evidence="9">The SAH (single alpha-helix) region is characterized by a high content of charged residues which are predicted to stabilize the alpha-helical structure by ionic bonds. It can refold after extension suggesting an in vivo force-dependent function. The isolated SAH domain is monomeric.</text>
</comment>
<comment type="similarity">
    <text evidence="8">Belongs to the INCENP family.</text>
</comment>
<comment type="caution">
    <text evidence="9">Originally predicted to contain a coiled coil domain but shown to contain a stable SAH domain instead.</text>
</comment>
<protein>
    <recommendedName>
        <fullName>Inner centromere protein</fullName>
    </recommendedName>
</protein>
<feature type="chain" id="PRO_0000084199" description="Inner centromere protein">
    <location>
        <begin position="1"/>
        <end position="877"/>
    </location>
</feature>
<feature type="region of interest" description="Disordered" evidence="3">
    <location>
        <begin position="47"/>
        <end position="142"/>
    </location>
</feature>
<feature type="region of interest" description="Interaction with CBX5" evidence="6">
    <location>
        <begin position="135"/>
        <end position="270"/>
    </location>
</feature>
<feature type="region of interest" description="Disordered" evidence="3">
    <location>
        <begin position="178"/>
        <end position="210"/>
    </location>
</feature>
<feature type="region of interest" description="Disordered" evidence="3">
    <location>
        <begin position="248"/>
        <end position="459"/>
    </location>
</feature>
<feature type="region of interest" description="Disordered" evidence="3">
    <location>
        <begin position="498"/>
        <end position="548"/>
    </location>
</feature>
<feature type="region of interest" description="SAH" evidence="9">
    <location>
        <begin position="503"/>
        <end position="715"/>
    </location>
</feature>
<feature type="region of interest" description="Disordered" evidence="3">
    <location>
        <begin position="572"/>
        <end position="695"/>
    </location>
</feature>
<feature type="region of interest" description="Disordered" evidence="3">
    <location>
        <begin position="707"/>
        <end position="805"/>
    </location>
</feature>
<feature type="region of interest" description="IN box" evidence="8">
    <location>
        <begin position="781"/>
        <end position="823"/>
    </location>
</feature>
<feature type="short sequence motif" description="PXVXL/I motif" evidence="2">
    <location>
        <begin position="155"/>
        <end position="159"/>
    </location>
</feature>
<feature type="compositionally biased region" description="Basic residues" evidence="3">
    <location>
        <begin position="62"/>
        <end position="71"/>
    </location>
</feature>
<feature type="compositionally biased region" description="Basic and acidic residues" evidence="3">
    <location>
        <begin position="98"/>
        <end position="111"/>
    </location>
</feature>
<feature type="compositionally biased region" description="Polar residues" evidence="3">
    <location>
        <begin position="119"/>
        <end position="134"/>
    </location>
</feature>
<feature type="compositionally biased region" description="Basic and acidic residues" evidence="3">
    <location>
        <begin position="261"/>
        <end position="271"/>
    </location>
</feature>
<feature type="compositionally biased region" description="Polar residues" evidence="3">
    <location>
        <begin position="272"/>
        <end position="283"/>
    </location>
</feature>
<feature type="compositionally biased region" description="Low complexity" evidence="3">
    <location>
        <begin position="339"/>
        <end position="351"/>
    </location>
</feature>
<feature type="compositionally biased region" description="Polar residues" evidence="3">
    <location>
        <begin position="384"/>
        <end position="403"/>
    </location>
</feature>
<feature type="compositionally biased region" description="Basic and acidic residues" evidence="3">
    <location>
        <begin position="500"/>
        <end position="548"/>
    </location>
</feature>
<feature type="compositionally biased region" description="Basic and acidic residues" evidence="3">
    <location>
        <begin position="572"/>
        <end position="591"/>
    </location>
</feature>
<feature type="compositionally biased region" description="Basic and acidic residues" evidence="3">
    <location>
        <begin position="598"/>
        <end position="615"/>
    </location>
</feature>
<feature type="compositionally biased region" description="Basic and acidic residues" evidence="3">
    <location>
        <begin position="624"/>
        <end position="695"/>
    </location>
</feature>
<feature type="compositionally biased region" description="Basic and acidic residues" evidence="3">
    <location>
        <begin position="707"/>
        <end position="742"/>
    </location>
</feature>
<feature type="compositionally biased region" description="Polar residues" evidence="3">
    <location>
        <begin position="744"/>
        <end position="765"/>
    </location>
</feature>
<feature type="splice variant" id="VSP_004292" description="In isoform INCENP I." evidence="7">
    <location>
        <begin position="716"/>
        <end position="753"/>
    </location>
</feature>
<feature type="sequence variant">
    <original>A</original>
    <variation>T</variation>
    <location>
        <position position="257"/>
    </location>
</feature>
<feature type="sequence variant">
    <original>E</original>
    <variation>Q</variation>
    <location>
        <position position="471"/>
    </location>
</feature>
<feature type="mutagenesis site" description="Disrupts interaction with AURKB." evidence="4">
    <original>W</original>
    <variation>G</variation>
    <location>
        <position position="804"/>
    </location>
</feature>
<feature type="mutagenesis site" description="Interacts with AURKB but fails to fully activate AURKB." evidence="4">
    <original>F</original>
    <variation>A</variation>
    <location>
        <position position="840"/>
    </location>
</feature>
<evidence type="ECO:0000250" key="1">
    <source>
        <dbReference type="UniProtKB" id="O13024"/>
    </source>
</evidence>
<evidence type="ECO:0000250" key="2">
    <source>
        <dbReference type="UniProtKB" id="Q9NQS7"/>
    </source>
</evidence>
<evidence type="ECO:0000256" key="3">
    <source>
        <dbReference type="SAM" id="MobiDB-lite"/>
    </source>
</evidence>
<evidence type="ECO:0000269" key="4">
    <source>
    </source>
</evidence>
<evidence type="ECO:0000269" key="5">
    <source>
    </source>
</evidence>
<evidence type="ECO:0000269" key="6">
    <source>
    </source>
</evidence>
<evidence type="ECO:0000303" key="7">
    <source>
    </source>
</evidence>
<evidence type="ECO:0000305" key="8"/>
<evidence type="ECO:0000305" key="9">
    <source>
    </source>
</evidence>
<organism>
    <name type="scientific">Gallus gallus</name>
    <name type="common">Chicken</name>
    <dbReference type="NCBI Taxonomy" id="9031"/>
    <lineage>
        <taxon>Eukaryota</taxon>
        <taxon>Metazoa</taxon>
        <taxon>Chordata</taxon>
        <taxon>Craniata</taxon>
        <taxon>Vertebrata</taxon>
        <taxon>Euteleostomi</taxon>
        <taxon>Archelosauria</taxon>
        <taxon>Archosauria</taxon>
        <taxon>Dinosauria</taxon>
        <taxon>Saurischia</taxon>
        <taxon>Theropoda</taxon>
        <taxon>Coelurosauria</taxon>
        <taxon>Aves</taxon>
        <taxon>Neognathae</taxon>
        <taxon>Galloanserae</taxon>
        <taxon>Galliformes</taxon>
        <taxon>Phasianidae</taxon>
        <taxon>Phasianinae</taxon>
        <taxon>Gallus</taxon>
    </lineage>
</organism>
<reference key="1">
    <citation type="journal article" date="1993" name="J. Cell Biol.">
        <title>Molecular analysis of the INCENPs (inner centromere proteins): separate domains are required for association with microtubules during interphase and with the central spindle during anaphase.</title>
        <authorList>
            <person name="Mackay A.M."/>
            <person name="Eckley D.M."/>
            <person name="Chue C."/>
            <person name="Earnshaw W.C."/>
        </authorList>
    </citation>
    <scope>NUCLEOTIDE SEQUENCE [MRNA] (ISOFORMS INCENP I AND INCENP II)</scope>
    <scope>SUBCELLULAR LOCATION</scope>
</reference>
<reference key="2">
    <citation type="journal article" date="1998" name="J. Cell Biol.">
        <title>INCENP centromere and spindle targeting: identification of essential conserved motifs and involvement of heterochromatin protein HP1.</title>
        <authorList>
            <person name="Ainsztein A.M."/>
            <person name="Kandels-Lewis S.E."/>
            <person name="Mackay A.M."/>
            <person name="Earnshaw W.C."/>
        </authorList>
    </citation>
    <scope>INTERACTION WITH CBX5</scope>
</reference>
<reference key="3">
    <citation type="journal article" date="2009" name="J. Cell Biol.">
        <title>INCENP-aurora B interactions modulate kinase activity and chromosome passenger complex localization.</title>
        <authorList>
            <person name="Xu Z."/>
            <person name="Ogawa H."/>
            <person name="Vagnarelli P."/>
            <person name="Bergmann J.H."/>
            <person name="Hudson D.F."/>
            <person name="Ruchaud S."/>
            <person name="Fukagawa T."/>
            <person name="Earnshaw W.C."/>
            <person name="Samejima K."/>
        </authorList>
    </citation>
    <scope>FUNCTION</scope>
    <scope>INTERACTION WITH AURKB</scope>
    <scope>MUTAGENESIS OF TRP-804 AND PHE-840</scope>
</reference>
<reference key="4">
    <citation type="journal article" date="2015" name="J. Biol. Chem.">
        <title>The inner centromere protein (INCENP) coil is a single alpha-helix (SAH) domain that binds directly to microtubules and is important for chromosome passenger complex (CPC) localization and function in mitosis.</title>
        <authorList>
            <person name="Samejima K."/>
            <person name="Platani M."/>
            <person name="Wolny M."/>
            <person name="Ogawa H."/>
            <person name="Vargiu G."/>
            <person name="Knight P.J."/>
            <person name="Peckham M."/>
            <person name="Earnshaw W.C."/>
        </authorList>
    </citation>
    <scope>SAH DOMAIN</scope>
    <scope>SUBUNIT</scope>
    <scope>FUNCTION</scope>
</reference>
<dbReference type="EMBL" id="Z25419">
    <property type="protein sequence ID" value="CAA80906.1"/>
    <property type="molecule type" value="mRNA"/>
</dbReference>
<dbReference type="EMBL" id="Z25420">
    <property type="protein sequence ID" value="CAA80907.1"/>
    <property type="molecule type" value="mRNA"/>
</dbReference>
<dbReference type="PIR" id="I50590">
    <property type="entry name" value="I50590"/>
</dbReference>
<dbReference type="PIR" id="I50591">
    <property type="entry name" value="I50591"/>
</dbReference>
<dbReference type="RefSeq" id="NP_990661.1">
    <property type="nucleotide sequence ID" value="NM_205330.1"/>
</dbReference>
<dbReference type="BioGRID" id="676530">
    <property type="interactions" value="1"/>
</dbReference>
<dbReference type="FunCoup" id="P53352">
    <property type="interactions" value="905"/>
</dbReference>
<dbReference type="STRING" id="9031.ENSGALP00000012175"/>
<dbReference type="PaxDb" id="9031-ENSGALP00000012175"/>
<dbReference type="GeneID" id="396270"/>
<dbReference type="KEGG" id="gga:396270"/>
<dbReference type="CTD" id="3619"/>
<dbReference type="VEuPathDB" id="HostDB:geneid_396270"/>
<dbReference type="eggNOG" id="KOG4456">
    <property type="taxonomic scope" value="Eukaryota"/>
</dbReference>
<dbReference type="InParanoid" id="P53352"/>
<dbReference type="OrthoDB" id="6123at2759"/>
<dbReference type="PhylomeDB" id="P53352"/>
<dbReference type="PRO" id="PR:P53352"/>
<dbReference type="Proteomes" id="UP000000539">
    <property type="component" value="Unassembled WGS sequence"/>
</dbReference>
<dbReference type="GO" id="GO:0032133">
    <property type="term" value="C:chromosome passenger complex"/>
    <property type="evidence" value="ECO:0000318"/>
    <property type="project" value="GO_Central"/>
</dbReference>
<dbReference type="GO" id="GO:0000775">
    <property type="term" value="C:chromosome, centromeric region"/>
    <property type="evidence" value="ECO:0000250"/>
    <property type="project" value="UniProtKB"/>
</dbReference>
<dbReference type="GO" id="GO:0005737">
    <property type="term" value="C:cytoplasm"/>
    <property type="evidence" value="ECO:0007669"/>
    <property type="project" value="UniProtKB-KW"/>
</dbReference>
<dbReference type="GO" id="GO:0000776">
    <property type="term" value="C:kinetochore"/>
    <property type="evidence" value="ECO:0000318"/>
    <property type="project" value="GO_Central"/>
</dbReference>
<dbReference type="GO" id="GO:1990385">
    <property type="term" value="C:meiotic spindle midzone"/>
    <property type="evidence" value="ECO:0000318"/>
    <property type="project" value="GO_Central"/>
</dbReference>
<dbReference type="GO" id="GO:0005874">
    <property type="term" value="C:microtubule"/>
    <property type="evidence" value="ECO:0007669"/>
    <property type="project" value="UniProtKB-KW"/>
</dbReference>
<dbReference type="GO" id="GO:0030496">
    <property type="term" value="C:midbody"/>
    <property type="evidence" value="ECO:0000318"/>
    <property type="project" value="GO_Central"/>
</dbReference>
<dbReference type="GO" id="GO:0005634">
    <property type="term" value="C:nucleus"/>
    <property type="evidence" value="ECO:0000318"/>
    <property type="project" value="GO_Central"/>
</dbReference>
<dbReference type="GO" id="GO:0005721">
    <property type="term" value="C:pericentric heterochromatin"/>
    <property type="evidence" value="ECO:0000250"/>
    <property type="project" value="UniProtKB"/>
</dbReference>
<dbReference type="GO" id="GO:0032991">
    <property type="term" value="C:protein-containing complex"/>
    <property type="evidence" value="ECO:0000250"/>
    <property type="project" value="UniProtKB"/>
</dbReference>
<dbReference type="GO" id="GO:0005819">
    <property type="term" value="C:spindle"/>
    <property type="evidence" value="ECO:0000250"/>
    <property type="project" value="UniProtKB"/>
</dbReference>
<dbReference type="GO" id="GO:0007059">
    <property type="term" value="P:chromosome segregation"/>
    <property type="evidence" value="ECO:0000250"/>
    <property type="project" value="UniProtKB"/>
</dbReference>
<dbReference type="GO" id="GO:0051257">
    <property type="term" value="P:meiotic spindle midzone assembly"/>
    <property type="evidence" value="ECO:0000318"/>
    <property type="project" value="GO_Central"/>
</dbReference>
<dbReference type="GO" id="GO:0051310">
    <property type="term" value="P:metaphase chromosome alignment"/>
    <property type="evidence" value="ECO:0000318"/>
    <property type="project" value="GO_Central"/>
</dbReference>
<dbReference type="GO" id="GO:0000281">
    <property type="term" value="P:mitotic cytokinesis"/>
    <property type="evidence" value="ECO:0000250"/>
    <property type="project" value="UniProtKB"/>
</dbReference>
<dbReference type="Gene3D" id="1.20.5.3600">
    <property type="match status" value="1"/>
</dbReference>
<dbReference type="Gene3D" id="6.10.250.2990">
    <property type="match status" value="1"/>
</dbReference>
<dbReference type="InterPro" id="IPR022006">
    <property type="entry name" value="INCENP_N"/>
</dbReference>
<dbReference type="InterPro" id="IPR005635">
    <property type="entry name" value="Inner_centromere_prot_ARK-bd"/>
</dbReference>
<dbReference type="PANTHER" id="PTHR13142">
    <property type="entry name" value="INNER CENTROMERE PROTEIN"/>
    <property type="match status" value="1"/>
</dbReference>
<dbReference type="PANTHER" id="PTHR13142:SF1">
    <property type="entry name" value="INNER CENTROMERE PROTEIN"/>
    <property type="match status" value="1"/>
</dbReference>
<dbReference type="Pfam" id="PF03941">
    <property type="entry name" value="INCENP_ARK-bind"/>
    <property type="match status" value="1"/>
</dbReference>
<dbReference type="Pfam" id="PF12178">
    <property type="entry name" value="INCENP_N"/>
    <property type="match status" value="1"/>
</dbReference>
<keyword id="KW-0025">Alternative splicing</keyword>
<keyword id="KW-0131">Cell cycle</keyword>
<keyword id="KW-0132">Cell division</keyword>
<keyword id="KW-0137">Centromere</keyword>
<keyword id="KW-0158">Chromosome</keyword>
<keyword id="KW-0159">Chromosome partition</keyword>
<keyword id="KW-0963">Cytoplasm</keyword>
<keyword id="KW-0206">Cytoskeleton</keyword>
<keyword id="KW-0995">Kinetochore</keyword>
<keyword id="KW-0493">Microtubule</keyword>
<keyword id="KW-0498">Mitosis</keyword>
<keyword id="KW-0539">Nucleus</keyword>
<keyword id="KW-1185">Reference proteome</keyword>
<sequence length="877" mass="100941">MAVATGLARLPVVCNQRLAELLRQVDDVDLLWLEEIHEEAARMFGSHYSDQPELMPKTPSQKNRKRRKRPSALRGESLELGRRRLSRRRTNNLKAVSSKRDSQRLQNKEDTEGLGTEAQELSSQTVSRRLTRSQVAAPADRSEVLPEHLRERVVPVVEISVCDRISAEFQFQKCASERAENHSASLPPSSDDKSPKESSAAESQPLPAASELIVPHTPEAKGAGKNKSAFKKTANVADTTVVLSEKELGLEEVDDSAQVQKHNERDDKEPSQRTTDSPETPTGSRLSRRSVRRSLMGKPSTIRRTSLAEKYSLARKRESTIRKSIARTVIKRKAPQKLSVSSSSVNGSGSEEVPEDEETVVNAGPPPVPQTPPKLDFQGLRMSLRSQTVNRNEQQQETSNNECDLSKSEKTQEPPQSARRKTSYKRAVDQRYDTQQAEDGGLSPLRKKTPSPPCPASKVVRPFKTFLHTVEKNQLLMTPSSVGRNGVIKSFIKYNTPLQHDPKEKERQKLQALRKKEEAEQLRKQKVEEEKKRRQEEAKLRREERLRKVLQARERAEQLEEERKRRIEQKLALFDEKTEKAREERLAEEKIKKRAAAKKMEEAEARRRQDEEARKQKALQQEEEERRHKELMQKKKEEEQERARKIAEQRQAEQEREKQLAAEREQERKKEQERKKEEERIQAEKQREQQEKAARLQKEVLAAKEQLQKEMEKKEKEEQLLAEMKRQEQEQKKLPEEQKAKDVAQTQHLENKENSPACNSYQMTPQYHKDPKPPKINPNNYGMDLNSDDSTDDESQPRKPIPAWASGNQLSQAVIRQYYNPPNVDALFGTIVSPKLEDIFYKSKPRYFKRTSSAVWNSPPFPGAKSVLGLPYSLKKY</sequence>
<name>INCE_CHICK</name>
<accession>P53352</accession>
<gene>
    <name type="primary">INCENP</name>
</gene>